<sequence length="274" mass="31772">WIMGHMVNAIEQVDEFLNLGANAIEFDIDFDKDGIAQITHHGIPCDCGRKCTKKAIFTEYLDNIRQVTTPDDPKFREQLVLLALDLKLQRISSAKAYRAGEDVAKKLLDHYWQRGNSRARAYILLNIPLVEDYEFIRAFKDTLKNEGYESYNDRVGINFTGNEDLDKIRDVLEILGIHKQVWQADGITSCFARGTERLKEALEKRDTPGYNYINKVYAWTLVRKSIMRRSLRLGVDGVMSNNPDRVIKVLKEKEFADKFRLATYNDNPWEKFRG</sequence>
<proteinExistence type="evidence at transcript level"/>
<reference key="1">
    <citation type="journal article" date="2009" name="Mol. Biol. Evol.">
        <title>Molecular evolution, functional variation, and proposed nomenclature of the gene family that includes sphingomyelinase D in sicariid spider venoms.</title>
        <authorList>
            <person name="Binford G.J."/>
            <person name="Bodner M.R."/>
            <person name="Cordes M.H."/>
            <person name="Baldwin K.L."/>
            <person name="Rynerson M.R."/>
            <person name="Burns S.N."/>
            <person name="Zobel-Thropp P.A."/>
        </authorList>
    </citation>
    <scope>NUCLEOTIDE SEQUENCE [MRNA]</scope>
    <scope>NOMENCLATURE</scope>
    <source>
        <tissue>Venom gland</tissue>
    </source>
</reference>
<feature type="chain" id="PRO_0000392893" description="Dermonecrotic toxin SdSicTox-betaIIB1bviii">
    <location>
        <begin position="1" status="less than"/>
        <end position="274"/>
    </location>
</feature>
<feature type="active site" evidence="5">
    <location>
        <position position="5"/>
    </location>
</feature>
<feature type="active site" description="Nucleophile" evidence="5">
    <location>
        <position position="41"/>
    </location>
</feature>
<feature type="binding site" evidence="5">
    <location>
        <position position="25"/>
    </location>
    <ligand>
        <name>Mg(2+)</name>
        <dbReference type="ChEBI" id="CHEBI:18420"/>
    </ligand>
</feature>
<feature type="binding site" evidence="5">
    <location>
        <position position="27"/>
    </location>
    <ligand>
        <name>Mg(2+)</name>
        <dbReference type="ChEBI" id="CHEBI:18420"/>
    </ligand>
</feature>
<feature type="binding site" evidence="5">
    <location>
        <position position="85"/>
    </location>
    <ligand>
        <name>Mg(2+)</name>
        <dbReference type="ChEBI" id="CHEBI:18420"/>
    </ligand>
</feature>
<feature type="disulfide bond" evidence="3">
    <location>
        <begin position="45"/>
        <end position="51"/>
    </location>
</feature>
<feature type="disulfide bond" evidence="3">
    <location>
        <begin position="47"/>
        <end position="190"/>
    </location>
</feature>
<feature type="non-terminal residue">
    <location>
        <position position="1"/>
    </location>
</feature>
<keyword id="KW-0204">Cytolysis</keyword>
<keyword id="KW-1061">Dermonecrotic toxin</keyword>
<keyword id="KW-1015">Disulfide bond</keyword>
<keyword id="KW-0354">Hemolysis</keyword>
<keyword id="KW-0442">Lipid degradation</keyword>
<keyword id="KW-0443">Lipid metabolism</keyword>
<keyword id="KW-0456">Lyase</keyword>
<keyword id="KW-0460">Magnesium</keyword>
<keyword id="KW-0479">Metal-binding</keyword>
<keyword id="KW-0964">Secreted</keyword>
<keyword id="KW-0800">Toxin</keyword>
<protein>
    <recommendedName>
        <fullName evidence="6">Dermonecrotic toxin SdSicTox-betaIIB1bviii</fullName>
        <ecNumber evidence="4">4.6.1.-</ecNumber>
    </recommendedName>
    <alternativeName>
        <fullName>Phospholipase D</fullName>
        <shortName>PLD</shortName>
    </alternativeName>
    <alternativeName>
        <fullName>Sphingomyelin phosphodiesterase D</fullName>
        <shortName>SMD</shortName>
        <shortName>SMase D</shortName>
        <shortName>Sphingomyelinase D</shortName>
    </alternativeName>
</protein>
<organism>
    <name type="scientific">Sicarius cf. damarensis (strain GJB-2008)</name>
    <name type="common">Six-eyed sand spider</name>
    <dbReference type="NCBI Taxonomy" id="575956"/>
    <lineage>
        <taxon>Eukaryota</taxon>
        <taxon>Metazoa</taxon>
        <taxon>Ecdysozoa</taxon>
        <taxon>Arthropoda</taxon>
        <taxon>Chelicerata</taxon>
        <taxon>Arachnida</taxon>
        <taxon>Araneae</taxon>
        <taxon>Araneomorphae</taxon>
        <taxon>Haplogynae</taxon>
        <taxon>Scytodoidea</taxon>
        <taxon>Sicariidae</taxon>
        <taxon>Sicarius</taxon>
    </lineage>
</organism>
<evidence type="ECO:0000250" key="1">
    <source>
        <dbReference type="UniProtKB" id="A0A0D4WTV1"/>
    </source>
</evidence>
<evidence type="ECO:0000250" key="2">
    <source>
        <dbReference type="UniProtKB" id="A0A0D4WV12"/>
    </source>
</evidence>
<evidence type="ECO:0000250" key="3">
    <source>
        <dbReference type="UniProtKB" id="P0CE80"/>
    </source>
</evidence>
<evidence type="ECO:0000250" key="4">
    <source>
        <dbReference type="UniProtKB" id="Q4ZFU2"/>
    </source>
</evidence>
<evidence type="ECO:0000250" key="5">
    <source>
        <dbReference type="UniProtKB" id="Q8I914"/>
    </source>
</evidence>
<evidence type="ECO:0000303" key="6">
    <source>
    </source>
</evidence>
<evidence type="ECO:0000305" key="7"/>
<evidence type="ECO:0000305" key="8">
    <source>
    </source>
</evidence>
<dbReference type="EC" id="4.6.1.-" evidence="4"/>
<dbReference type="EMBL" id="FJ171517">
    <property type="protein sequence ID" value="ACN49013.1"/>
    <property type="molecule type" value="mRNA"/>
</dbReference>
<dbReference type="SMR" id="C0JB82"/>
<dbReference type="GO" id="GO:0005576">
    <property type="term" value="C:extracellular region"/>
    <property type="evidence" value="ECO:0007669"/>
    <property type="project" value="UniProtKB-SubCell"/>
</dbReference>
<dbReference type="GO" id="GO:0016829">
    <property type="term" value="F:lyase activity"/>
    <property type="evidence" value="ECO:0007669"/>
    <property type="project" value="UniProtKB-KW"/>
</dbReference>
<dbReference type="GO" id="GO:0046872">
    <property type="term" value="F:metal ion binding"/>
    <property type="evidence" value="ECO:0007669"/>
    <property type="project" value="UniProtKB-KW"/>
</dbReference>
<dbReference type="GO" id="GO:0008081">
    <property type="term" value="F:phosphoric diester hydrolase activity"/>
    <property type="evidence" value="ECO:0007669"/>
    <property type="project" value="InterPro"/>
</dbReference>
<dbReference type="GO" id="GO:0090729">
    <property type="term" value="F:toxin activity"/>
    <property type="evidence" value="ECO:0007669"/>
    <property type="project" value="UniProtKB-KW"/>
</dbReference>
<dbReference type="GO" id="GO:0031640">
    <property type="term" value="P:killing of cells of another organism"/>
    <property type="evidence" value="ECO:0007669"/>
    <property type="project" value="UniProtKB-KW"/>
</dbReference>
<dbReference type="GO" id="GO:0016042">
    <property type="term" value="P:lipid catabolic process"/>
    <property type="evidence" value="ECO:0007669"/>
    <property type="project" value="UniProtKB-KW"/>
</dbReference>
<dbReference type="CDD" id="cd08576">
    <property type="entry name" value="GDPD_like_SMaseD_PLD"/>
    <property type="match status" value="1"/>
</dbReference>
<dbReference type="Gene3D" id="3.20.20.190">
    <property type="entry name" value="Phosphatidylinositol (PI) phosphodiesterase"/>
    <property type="match status" value="1"/>
</dbReference>
<dbReference type="InterPro" id="IPR017946">
    <property type="entry name" value="PLC-like_Pdiesterase_TIM-brl"/>
</dbReference>
<dbReference type="SUPFAM" id="SSF51695">
    <property type="entry name" value="PLC-like phosphodiesterases"/>
    <property type="match status" value="1"/>
</dbReference>
<comment type="function">
    <text evidence="1 3">Dermonecrotic toxins cleave the phosphodiester linkage between the phosphate and headgroup of certain phospholipids (sphingolipid and lysolipid substrates), forming an alcohol (often choline) and a cyclic phosphate (By similarity). This toxin acts on sphingomyelin (SM) (By similarity). It may also act on ceramide phosphoethanolamine (CPE), lysophosphatidylcholine (LPC) and lysophosphatidylethanolamine (LPE), but not on lysophosphatidylserine (LPS), and lysophosphatidylglycerol (LPG) (By similarity). It acts by transphosphatidylation, releasing exclusively cyclic phosphate products as second products (By similarity). Induces dermonecrosis, hemolysis, increased vascular permeability, edema, inflammatory response, and platelet aggregation (By similarity).</text>
</comment>
<comment type="catalytic activity">
    <reaction evidence="1">
        <text>an N-(acyl)-sphingosylphosphocholine = an N-(acyl)-sphingosyl-1,3-cyclic phosphate + choline</text>
        <dbReference type="Rhea" id="RHEA:60652"/>
        <dbReference type="ChEBI" id="CHEBI:15354"/>
        <dbReference type="ChEBI" id="CHEBI:64583"/>
        <dbReference type="ChEBI" id="CHEBI:143892"/>
    </reaction>
</comment>
<comment type="catalytic activity">
    <reaction evidence="1">
        <text>an N-(acyl)-sphingosylphosphoethanolamine = an N-(acyl)-sphingosyl-1,3-cyclic phosphate + ethanolamine</text>
        <dbReference type="Rhea" id="RHEA:60648"/>
        <dbReference type="ChEBI" id="CHEBI:57603"/>
        <dbReference type="ChEBI" id="CHEBI:143891"/>
        <dbReference type="ChEBI" id="CHEBI:143892"/>
    </reaction>
</comment>
<comment type="catalytic activity">
    <reaction evidence="1">
        <text>a 1-acyl-sn-glycero-3-phosphocholine = a 1-acyl-sn-glycero-2,3-cyclic phosphate + choline</text>
        <dbReference type="Rhea" id="RHEA:60700"/>
        <dbReference type="ChEBI" id="CHEBI:15354"/>
        <dbReference type="ChEBI" id="CHEBI:58168"/>
        <dbReference type="ChEBI" id="CHEBI:143947"/>
    </reaction>
</comment>
<comment type="catalytic activity">
    <reaction evidence="1">
        <text>a 1-acyl-sn-glycero-3-phosphoethanolamine = a 1-acyl-sn-glycero-2,3-cyclic phosphate + ethanolamine</text>
        <dbReference type="Rhea" id="RHEA:60704"/>
        <dbReference type="ChEBI" id="CHEBI:57603"/>
        <dbReference type="ChEBI" id="CHEBI:64381"/>
        <dbReference type="ChEBI" id="CHEBI:143947"/>
    </reaction>
</comment>
<comment type="cofactor">
    <cofactor evidence="5">
        <name>Mg(2+)</name>
        <dbReference type="ChEBI" id="CHEBI:18420"/>
    </cofactor>
    <text evidence="5">Binds 1 Mg(2+) ion per subunit.</text>
</comment>
<comment type="subcellular location">
    <subcellularLocation>
        <location evidence="8">Secreted</location>
    </subcellularLocation>
</comment>
<comment type="tissue specificity">
    <text evidence="8">Expressed by the venom gland.</text>
</comment>
<comment type="similarity">
    <text evidence="7">Belongs to the arthropod phospholipase D family. Class II subfamily.</text>
</comment>
<comment type="caution">
    <text evidence="1 2 4">The most common activity assay for dermonecrotic toxins detects enzymatic activity by monitoring choline release from substrate. Liberation of choline from sphingomyelin (SM) or lysophosphatidylcholine (LPC) is commonly assumed to result from substrate hydrolysis, giving either ceramide-1-phosphate (C1P) or lysophosphatidic acid (LPA), respectively, as a second product. However, two studies from Lajoie and colleagues (2013 and 2015) report the observation of exclusive formation of cyclic phosphate products as second products, resulting from intramolecular transphosphatidylation. Cyclic phosphates have vastly different biological properties from their monoester counterparts, and they may be relevant to the pathology of brown spider envenomation.</text>
</comment>
<name>B2KB8_SICCD</name>
<accession>C0JB82</accession>